<sequence length="749" mass="82915">MFKRTIPLFAAFTLAISPSIFPNYAHAQEDKPKTNQYWWPKMLDLSPLRQPNATSNPMGEKFNYAEEFNSLDLNAVIEDLKKLMTTSQDWWPADYGNYGPLFIRMSWHAAGTYRIYDGRGGANGGFQRFAPQNSWPDNANLDKARRLLWPIKQKYGRKISWADLLVLAGNVAMESMGFKTIGFAGGREDAWEAININWGPEGKWLESKRQDKDGKLEKPLAATVMGLIYVNPEGPNGVPDPLAAAEKIRETFGRMAMNDEETVALIAGGHAFGKTHGAASGKYLGPAPEAAGIEEQGFGWKNSYGSGKGKDTITSGLEGAWTVTPTHWSHNYLQNLFNFNWVKTKSPGGAIQWVPENSNASSMVPDAFDPSKRHAPVMLTTDLALKFDPVYSKIAKRFLDNPKEFDDAFARAWFKLIHRDMGPRSRYLGSLVPKEAMIWQDPVPPVDYKLVDANDIANLKGKILNSGLTTSELVKTAWASASTFRGTDMRGGANGARIRLAPQKDWPANDPQELAKVLKTLESIQNNFNNAQADGKKISLADLIVLGGNAAIEQAAKQAGYDIIVPFTPGRTDATQGMTDVKSFEVLEPKADGFRNYFDKSNNMSPPEMLVEKASLLKLSVPEMTVLVGGMRVLNANTGQNQYGVFTDKPGTLNNDFFINLLSMSTEWKKSSETEGIYEGYERKTGKLKWKATSVDLIFGANSELRAVAEAYATDDAKEKFIQDFINAWVKVMTADRFDIKAANANINS</sequence>
<dbReference type="EC" id="1.11.1.21" evidence="1"/>
<dbReference type="EMBL" id="AE017354">
    <property type="protein sequence ID" value="AAU26301.1"/>
    <property type="molecule type" value="Genomic_DNA"/>
</dbReference>
<dbReference type="RefSeq" id="YP_094248.1">
    <property type="nucleotide sequence ID" value="NC_002942.5"/>
</dbReference>
<dbReference type="SMR" id="Q5ZZ17"/>
<dbReference type="STRING" id="272624.lpg0194"/>
<dbReference type="PeroxiBase" id="2642">
    <property type="entry name" value="LpnCP01_Philadelphia-1"/>
</dbReference>
<dbReference type="PaxDb" id="272624-lpg0194"/>
<dbReference type="KEGG" id="lpn:lpg0194"/>
<dbReference type="PATRIC" id="fig|272624.6.peg.207"/>
<dbReference type="eggNOG" id="COG0376">
    <property type="taxonomic scope" value="Bacteria"/>
</dbReference>
<dbReference type="HOGENOM" id="CLU_025424_2_0_6"/>
<dbReference type="OrthoDB" id="9759743at2"/>
<dbReference type="Proteomes" id="UP000000609">
    <property type="component" value="Chromosome"/>
</dbReference>
<dbReference type="GO" id="GO:0005829">
    <property type="term" value="C:cytosol"/>
    <property type="evidence" value="ECO:0007669"/>
    <property type="project" value="TreeGrafter"/>
</dbReference>
<dbReference type="GO" id="GO:0004096">
    <property type="term" value="F:catalase activity"/>
    <property type="evidence" value="ECO:0007669"/>
    <property type="project" value="UniProtKB-UniRule"/>
</dbReference>
<dbReference type="GO" id="GO:0020037">
    <property type="term" value="F:heme binding"/>
    <property type="evidence" value="ECO:0007669"/>
    <property type="project" value="InterPro"/>
</dbReference>
<dbReference type="GO" id="GO:0046872">
    <property type="term" value="F:metal ion binding"/>
    <property type="evidence" value="ECO:0007669"/>
    <property type="project" value="UniProtKB-KW"/>
</dbReference>
<dbReference type="GO" id="GO:0070301">
    <property type="term" value="P:cellular response to hydrogen peroxide"/>
    <property type="evidence" value="ECO:0007669"/>
    <property type="project" value="TreeGrafter"/>
</dbReference>
<dbReference type="GO" id="GO:0042744">
    <property type="term" value="P:hydrogen peroxide catabolic process"/>
    <property type="evidence" value="ECO:0007669"/>
    <property type="project" value="UniProtKB-KW"/>
</dbReference>
<dbReference type="CDD" id="cd00649">
    <property type="entry name" value="catalase_peroxidase_1"/>
    <property type="match status" value="1"/>
</dbReference>
<dbReference type="CDD" id="cd08200">
    <property type="entry name" value="catalase_peroxidase_2"/>
    <property type="match status" value="1"/>
</dbReference>
<dbReference type="FunFam" id="1.10.420.10:FF:000002">
    <property type="entry name" value="Catalase-peroxidase"/>
    <property type="match status" value="1"/>
</dbReference>
<dbReference type="FunFam" id="1.10.420.10:FF:000004">
    <property type="entry name" value="Catalase-peroxidase"/>
    <property type="match status" value="1"/>
</dbReference>
<dbReference type="FunFam" id="1.10.520.10:FF:000002">
    <property type="entry name" value="Catalase-peroxidase"/>
    <property type="match status" value="1"/>
</dbReference>
<dbReference type="Gene3D" id="1.10.520.10">
    <property type="match status" value="2"/>
</dbReference>
<dbReference type="Gene3D" id="1.10.420.10">
    <property type="entry name" value="Peroxidase, domain 2"/>
    <property type="match status" value="2"/>
</dbReference>
<dbReference type="HAMAP" id="MF_01961">
    <property type="entry name" value="Catal_peroxid"/>
    <property type="match status" value="1"/>
</dbReference>
<dbReference type="InterPro" id="IPR000763">
    <property type="entry name" value="Catalase_peroxidase"/>
</dbReference>
<dbReference type="InterPro" id="IPR002016">
    <property type="entry name" value="Haem_peroxidase"/>
</dbReference>
<dbReference type="InterPro" id="IPR010255">
    <property type="entry name" value="Haem_peroxidase_sf"/>
</dbReference>
<dbReference type="InterPro" id="IPR019794">
    <property type="entry name" value="Peroxidases_AS"/>
</dbReference>
<dbReference type="InterPro" id="IPR019793">
    <property type="entry name" value="Peroxidases_heam-ligand_BS"/>
</dbReference>
<dbReference type="NCBIfam" id="TIGR00198">
    <property type="entry name" value="cat_per_HPI"/>
    <property type="match status" value="1"/>
</dbReference>
<dbReference type="NCBIfam" id="NF011635">
    <property type="entry name" value="PRK15061.1"/>
    <property type="match status" value="1"/>
</dbReference>
<dbReference type="PANTHER" id="PTHR30555:SF0">
    <property type="entry name" value="CATALASE-PEROXIDASE"/>
    <property type="match status" value="1"/>
</dbReference>
<dbReference type="PANTHER" id="PTHR30555">
    <property type="entry name" value="HYDROPEROXIDASE I, BIFUNCTIONAL CATALASE-PEROXIDASE"/>
    <property type="match status" value="1"/>
</dbReference>
<dbReference type="Pfam" id="PF00141">
    <property type="entry name" value="peroxidase"/>
    <property type="match status" value="2"/>
</dbReference>
<dbReference type="PRINTS" id="PR00460">
    <property type="entry name" value="BPEROXIDASE"/>
</dbReference>
<dbReference type="PRINTS" id="PR00458">
    <property type="entry name" value="PEROXIDASE"/>
</dbReference>
<dbReference type="SUPFAM" id="SSF48113">
    <property type="entry name" value="Heme-dependent peroxidases"/>
    <property type="match status" value="2"/>
</dbReference>
<dbReference type="PROSITE" id="PS00435">
    <property type="entry name" value="PEROXIDASE_1"/>
    <property type="match status" value="1"/>
</dbReference>
<dbReference type="PROSITE" id="PS00436">
    <property type="entry name" value="PEROXIDASE_2"/>
    <property type="match status" value="1"/>
</dbReference>
<dbReference type="PROSITE" id="PS50873">
    <property type="entry name" value="PEROXIDASE_4"/>
    <property type="match status" value="1"/>
</dbReference>
<protein>
    <recommendedName>
        <fullName evidence="1">Catalase-peroxidase 2</fullName>
        <shortName evidence="1">CP 2</shortName>
        <ecNumber evidence="1">1.11.1.21</ecNumber>
    </recommendedName>
    <alternativeName>
        <fullName evidence="1">Peroxidase/catalase 2</fullName>
    </alternativeName>
</protein>
<proteinExistence type="inferred from homology"/>
<accession>Q5ZZ17</accession>
<reference key="1">
    <citation type="journal article" date="2004" name="Science">
        <title>The genomic sequence of the accidental pathogen Legionella pneumophila.</title>
        <authorList>
            <person name="Chien M."/>
            <person name="Morozova I."/>
            <person name="Shi S."/>
            <person name="Sheng H."/>
            <person name="Chen J."/>
            <person name="Gomez S.M."/>
            <person name="Asamani G."/>
            <person name="Hill K."/>
            <person name="Nuara J."/>
            <person name="Feder M."/>
            <person name="Rineer J."/>
            <person name="Greenberg J.J."/>
            <person name="Steshenko V."/>
            <person name="Park S.H."/>
            <person name="Zhao B."/>
            <person name="Teplitskaya E."/>
            <person name="Edwards J.R."/>
            <person name="Pampou S."/>
            <person name="Georghiou A."/>
            <person name="Chou I.-C."/>
            <person name="Iannuccilli W."/>
            <person name="Ulz M.E."/>
            <person name="Kim D.H."/>
            <person name="Geringer-Sameth A."/>
            <person name="Goldsberry C."/>
            <person name="Morozov P."/>
            <person name="Fischer S.G."/>
            <person name="Segal G."/>
            <person name="Qu X."/>
            <person name="Rzhetsky A."/>
            <person name="Zhang P."/>
            <person name="Cayanis E."/>
            <person name="De Jong P.J."/>
            <person name="Ju J."/>
            <person name="Kalachikov S."/>
            <person name="Shuman H.A."/>
            <person name="Russo J.J."/>
        </authorList>
    </citation>
    <scope>NUCLEOTIDE SEQUENCE [LARGE SCALE GENOMIC DNA]</scope>
    <source>
        <strain>Philadelphia 1 / ATCC 33152 / DSM 7513</strain>
    </source>
</reference>
<keyword id="KW-0349">Heme</keyword>
<keyword id="KW-0376">Hydrogen peroxide</keyword>
<keyword id="KW-0408">Iron</keyword>
<keyword id="KW-0479">Metal-binding</keyword>
<keyword id="KW-0560">Oxidoreductase</keyword>
<keyword id="KW-0575">Peroxidase</keyword>
<keyword id="KW-1185">Reference proteome</keyword>
<keyword id="KW-0732">Signal</keyword>
<gene>
    <name evidence="1" type="primary">katG2</name>
    <name type="ordered locus">lpg0194</name>
</gene>
<evidence type="ECO:0000255" key="1">
    <source>
        <dbReference type="HAMAP-Rule" id="MF_01961"/>
    </source>
</evidence>
<feature type="signal peptide" evidence="1">
    <location>
        <begin position="1"/>
        <end position="27"/>
    </location>
</feature>
<feature type="chain" id="PRO_0000354823" description="Catalase-peroxidase 2">
    <location>
        <begin position="28"/>
        <end position="749"/>
    </location>
</feature>
<feature type="active site" description="Proton acceptor" evidence="1">
    <location>
        <position position="108"/>
    </location>
</feature>
<feature type="binding site" description="axial binding residue" evidence="1">
    <location>
        <position position="270"/>
    </location>
    <ligand>
        <name>heme b</name>
        <dbReference type="ChEBI" id="CHEBI:60344"/>
    </ligand>
    <ligandPart>
        <name>Fe</name>
        <dbReference type="ChEBI" id="CHEBI:18248"/>
    </ligandPart>
</feature>
<feature type="site" description="Transition state stabilizer" evidence="1">
    <location>
        <position position="104"/>
    </location>
</feature>
<feature type="cross-link" description="Tryptophyl-tyrosyl-methioninium (Trp-Tyr) (with M-255)" evidence="1">
    <location>
        <begin position="107"/>
        <end position="229"/>
    </location>
</feature>
<feature type="cross-link" description="Tryptophyl-tyrosyl-methioninium (Tyr-Met) (with W-107)" evidence="1">
    <location>
        <begin position="229"/>
        <end position="255"/>
    </location>
</feature>
<comment type="function">
    <text evidence="1">Bifunctional enzyme with both catalase and broad-spectrum peroxidase activity.</text>
</comment>
<comment type="catalytic activity">
    <reaction evidence="1">
        <text>H2O2 + AH2 = A + 2 H2O</text>
        <dbReference type="Rhea" id="RHEA:30275"/>
        <dbReference type="ChEBI" id="CHEBI:13193"/>
        <dbReference type="ChEBI" id="CHEBI:15377"/>
        <dbReference type="ChEBI" id="CHEBI:16240"/>
        <dbReference type="ChEBI" id="CHEBI:17499"/>
        <dbReference type="EC" id="1.11.1.21"/>
    </reaction>
</comment>
<comment type="catalytic activity">
    <reaction evidence="1">
        <text>2 H2O2 = O2 + 2 H2O</text>
        <dbReference type="Rhea" id="RHEA:20309"/>
        <dbReference type="ChEBI" id="CHEBI:15377"/>
        <dbReference type="ChEBI" id="CHEBI:15379"/>
        <dbReference type="ChEBI" id="CHEBI:16240"/>
        <dbReference type="EC" id="1.11.1.21"/>
    </reaction>
</comment>
<comment type="cofactor">
    <cofactor evidence="1">
        <name>heme b</name>
        <dbReference type="ChEBI" id="CHEBI:60344"/>
    </cofactor>
    <text evidence="1">Binds 1 heme b (iron(II)-protoporphyrin IX) group per dimer.</text>
</comment>
<comment type="subunit">
    <text evidence="1">Homodimer or homotetramer.</text>
</comment>
<comment type="PTM">
    <text evidence="1">Formation of the three residue Trp-Tyr-Met cross-link is important for the catalase, but not the peroxidase activity of the enzyme.</text>
</comment>
<comment type="similarity">
    <text evidence="1">Belongs to the peroxidase family. Peroxidase/catalase subfamily.</text>
</comment>
<organism>
    <name type="scientific">Legionella pneumophila subsp. pneumophila (strain Philadelphia 1 / ATCC 33152 / DSM 7513)</name>
    <dbReference type="NCBI Taxonomy" id="272624"/>
    <lineage>
        <taxon>Bacteria</taxon>
        <taxon>Pseudomonadati</taxon>
        <taxon>Pseudomonadota</taxon>
        <taxon>Gammaproteobacteria</taxon>
        <taxon>Legionellales</taxon>
        <taxon>Legionellaceae</taxon>
        <taxon>Legionella</taxon>
    </lineage>
</organism>
<name>KATG2_LEGPH</name>